<feature type="chain" id="PRO_0000256659" description="NADH-ubiquinone oxidoreductase chain 2">
    <location>
        <begin position="1"/>
        <end position="347"/>
    </location>
</feature>
<feature type="transmembrane region" description="Helical" evidence="3">
    <location>
        <begin position="4"/>
        <end position="21"/>
    </location>
</feature>
<feature type="transmembrane region" description="Helical" evidence="3">
    <location>
        <begin position="26"/>
        <end position="44"/>
    </location>
</feature>
<feature type="transmembrane region" description="Helical" evidence="3">
    <location>
        <begin position="59"/>
        <end position="79"/>
    </location>
</feature>
<feature type="transmembrane region" description="Helical" evidence="3">
    <location>
        <begin position="93"/>
        <end position="115"/>
    </location>
</feature>
<feature type="transmembrane region" description="Helical" evidence="3">
    <location>
        <begin position="149"/>
        <end position="169"/>
    </location>
</feature>
<feature type="transmembrane region" description="Helical" evidence="3">
    <location>
        <begin position="178"/>
        <end position="198"/>
    </location>
</feature>
<feature type="transmembrane region" description="Helical" evidence="3">
    <location>
        <begin position="200"/>
        <end position="220"/>
    </location>
</feature>
<feature type="transmembrane region" description="Helical" evidence="3">
    <location>
        <begin position="241"/>
        <end position="261"/>
    </location>
</feature>
<feature type="transmembrane region" description="Helical" evidence="3">
    <location>
        <begin position="274"/>
        <end position="294"/>
    </location>
</feature>
<feature type="transmembrane region" description="Helical" evidence="3">
    <location>
        <begin position="323"/>
        <end position="343"/>
    </location>
</feature>
<evidence type="ECO:0000250" key="1">
    <source>
        <dbReference type="UniProtKB" id="P03891"/>
    </source>
</evidence>
<evidence type="ECO:0000250" key="2">
    <source>
        <dbReference type="UniProtKB" id="P03892"/>
    </source>
</evidence>
<evidence type="ECO:0000255" key="3"/>
<evidence type="ECO:0000305" key="4"/>
<sequence>MNPLALIMITTTIILGTVIVMMSSHWLLVWIGFEMNMLAVIPVLMKRHNPRAVEAATKYFLTQATASMLLMLAVVTNLLYSGQWTVANMTNPLASTVMTLALAMKLGLSPFHFWVPEVTQGVPLLSGLILLTWQKLAPLSVLYQTSPSLNLNLLLAMATVSVAVGGWGGLNQTQLRKILAYSSIAHMGWMTIILTYNPTLTLLNLLLYILMTATTFMLFMSNSSTTTLMLSHSWNKSPVAATSVLIIMLSLGGLPPLSGFLPKWMIIQELTKNESIFLPTLMAMMALLSLYFYMRLTYSTSLTLFPSTNNMKMKWQLEDTKRTPLLSPLIVMSTLALPLAPILSTLN</sequence>
<proteinExistence type="inferred from homology"/>
<protein>
    <recommendedName>
        <fullName evidence="1">NADH-ubiquinone oxidoreductase chain 2</fullName>
        <ecNumber evidence="1">7.1.1.2</ecNumber>
    </recommendedName>
    <alternativeName>
        <fullName>NADH dehydrogenase subunit 2</fullName>
    </alternativeName>
</protein>
<comment type="function">
    <text evidence="1">Core subunit of the mitochondrial membrane respiratory chain NADH dehydrogenase (Complex I) which catalyzes electron transfer from NADH through the respiratory chain, using ubiquinone as an electron acceptor. Essential for the catalytic activity and assembly of complex I.</text>
</comment>
<comment type="catalytic activity">
    <reaction evidence="1">
        <text>a ubiquinone + NADH + 5 H(+)(in) = a ubiquinol + NAD(+) + 4 H(+)(out)</text>
        <dbReference type="Rhea" id="RHEA:29091"/>
        <dbReference type="Rhea" id="RHEA-COMP:9565"/>
        <dbReference type="Rhea" id="RHEA-COMP:9566"/>
        <dbReference type="ChEBI" id="CHEBI:15378"/>
        <dbReference type="ChEBI" id="CHEBI:16389"/>
        <dbReference type="ChEBI" id="CHEBI:17976"/>
        <dbReference type="ChEBI" id="CHEBI:57540"/>
        <dbReference type="ChEBI" id="CHEBI:57945"/>
        <dbReference type="EC" id="7.1.1.2"/>
    </reaction>
</comment>
<comment type="subunit">
    <text evidence="1 2">Core subunit of respiratory chain NADH dehydrogenase (Complex I) which is composed of 45 different subunits. Interacts with TMEM242 (By similarity).</text>
</comment>
<comment type="subcellular location">
    <subcellularLocation>
        <location evidence="2">Mitochondrion inner membrane</location>
        <topology evidence="3">Multi-pass membrane protein</topology>
    </subcellularLocation>
</comment>
<comment type="similarity">
    <text evidence="4">Belongs to the complex I subunit 2 family.</text>
</comment>
<organism>
    <name type="scientific">Cardioderma cor</name>
    <name type="common">Heart-nosed bat</name>
    <dbReference type="NCBI Taxonomy" id="270764"/>
    <lineage>
        <taxon>Eukaryota</taxon>
        <taxon>Metazoa</taxon>
        <taxon>Chordata</taxon>
        <taxon>Craniata</taxon>
        <taxon>Vertebrata</taxon>
        <taxon>Euteleostomi</taxon>
        <taxon>Mammalia</taxon>
        <taxon>Eutheria</taxon>
        <taxon>Laurasiatheria</taxon>
        <taxon>Chiroptera</taxon>
        <taxon>Yinpterochiroptera</taxon>
        <taxon>Rhinolophoidea</taxon>
        <taxon>Megadermatidae</taxon>
        <taxon>Cardioderma</taxon>
    </lineage>
</organism>
<reference key="1">
    <citation type="submission" date="2003-12" db="EMBL/GenBank/DDBJ databases">
        <title>Bats and birds: flying in the face of mtDNA evolutionary rates.</title>
        <authorList>
            <person name="Worthington Wilmer J.M."/>
            <person name="Schneider C.J."/>
            <person name="Sorenson M.D."/>
        </authorList>
    </citation>
    <scope>NUCLEOTIDE SEQUENCE [GENOMIC DNA]</scope>
    <source>
        <strain>Isolate K1</strain>
    </source>
</reference>
<dbReference type="EC" id="7.1.1.2" evidence="1"/>
<dbReference type="EMBL" id="AY504540">
    <property type="protein sequence ID" value="AAS91405.1"/>
    <property type="molecule type" value="Genomic_DNA"/>
</dbReference>
<dbReference type="SMR" id="Q330F2"/>
<dbReference type="GO" id="GO:0005743">
    <property type="term" value="C:mitochondrial inner membrane"/>
    <property type="evidence" value="ECO:0000250"/>
    <property type="project" value="UniProtKB"/>
</dbReference>
<dbReference type="GO" id="GO:0008137">
    <property type="term" value="F:NADH dehydrogenase (ubiquinone) activity"/>
    <property type="evidence" value="ECO:0000250"/>
    <property type="project" value="UniProtKB"/>
</dbReference>
<dbReference type="GO" id="GO:0006120">
    <property type="term" value="P:mitochondrial electron transport, NADH to ubiquinone"/>
    <property type="evidence" value="ECO:0000250"/>
    <property type="project" value="UniProtKB"/>
</dbReference>
<dbReference type="GO" id="GO:0032981">
    <property type="term" value="P:mitochondrial respiratory chain complex I assembly"/>
    <property type="evidence" value="ECO:0000250"/>
    <property type="project" value="UniProtKB"/>
</dbReference>
<dbReference type="InterPro" id="IPR050175">
    <property type="entry name" value="Complex_I_Subunit_2"/>
</dbReference>
<dbReference type="InterPro" id="IPR010933">
    <property type="entry name" value="NADH_DH_su2_C"/>
</dbReference>
<dbReference type="InterPro" id="IPR003917">
    <property type="entry name" value="NADH_UbQ_OxRdtase_chain2"/>
</dbReference>
<dbReference type="InterPro" id="IPR001750">
    <property type="entry name" value="ND/Mrp_TM"/>
</dbReference>
<dbReference type="PANTHER" id="PTHR46552">
    <property type="entry name" value="NADH-UBIQUINONE OXIDOREDUCTASE CHAIN 2"/>
    <property type="match status" value="1"/>
</dbReference>
<dbReference type="PANTHER" id="PTHR46552:SF1">
    <property type="entry name" value="NADH-UBIQUINONE OXIDOREDUCTASE CHAIN 2"/>
    <property type="match status" value="1"/>
</dbReference>
<dbReference type="Pfam" id="PF06444">
    <property type="entry name" value="NADH_dehy_S2_C"/>
    <property type="match status" value="1"/>
</dbReference>
<dbReference type="Pfam" id="PF00361">
    <property type="entry name" value="Proton_antipo_M"/>
    <property type="match status" value="1"/>
</dbReference>
<dbReference type="PRINTS" id="PR01436">
    <property type="entry name" value="NADHDHGNASE2"/>
</dbReference>
<gene>
    <name evidence="1" type="primary">MT-ND2</name>
    <name type="synonym">MTND2</name>
    <name type="synonym">NADH2</name>
    <name type="synonym">ND2</name>
</gene>
<keyword id="KW-0249">Electron transport</keyword>
<keyword id="KW-0472">Membrane</keyword>
<keyword id="KW-0496">Mitochondrion</keyword>
<keyword id="KW-0999">Mitochondrion inner membrane</keyword>
<keyword id="KW-0520">NAD</keyword>
<keyword id="KW-0679">Respiratory chain</keyword>
<keyword id="KW-1278">Translocase</keyword>
<keyword id="KW-0812">Transmembrane</keyword>
<keyword id="KW-1133">Transmembrane helix</keyword>
<keyword id="KW-0813">Transport</keyword>
<keyword id="KW-0830">Ubiquinone</keyword>
<accession>Q330F2</accession>
<geneLocation type="mitochondrion"/>
<name>NU2M_CARCQ</name>